<protein>
    <recommendedName>
        <fullName evidence="2">Photosystem II protein D1</fullName>
        <shortName evidence="2">PSII D1 protein</shortName>
        <ecNumber evidence="2">1.10.3.9</ecNumber>
    </recommendedName>
    <alternativeName>
        <fullName evidence="3">32 kDa thylakoid membrane protein</fullName>
    </alternativeName>
    <alternativeName>
        <fullName evidence="2">Photosystem II Q(B) protein</fullName>
    </alternativeName>
</protein>
<comment type="function">
    <text evidence="2">Photosystem II (PSII) is a light-driven water:plastoquinone oxidoreductase that uses light energy to abstract electrons from H(2)O, generating O(2) and a proton gradient subsequently used for ATP formation. It consists of a core antenna complex that captures photons, and an electron transfer chain that converts photonic excitation into a charge separation. The D1/D2 (PsbA/PsbD) reaction center heterodimer binds P680, the primary electron donor of PSII as well as several subsequent electron acceptors.</text>
</comment>
<comment type="catalytic activity">
    <reaction evidence="2">
        <text>2 a plastoquinone + 4 hnu + 2 H2O = 2 a plastoquinol + O2</text>
        <dbReference type="Rhea" id="RHEA:36359"/>
        <dbReference type="Rhea" id="RHEA-COMP:9561"/>
        <dbReference type="Rhea" id="RHEA-COMP:9562"/>
        <dbReference type="ChEBI" id="CHEBI:15377"/>
        <dbReference type="ChEBI" id="CHEBI:15379"/>
        <dbReference type="ChEBI" id="CHEBI:17757"/>
        <dbReference type="ChEBI" id="CHEBI:30212"/>
        <dbReference type="ChEBI" id="CHEBI:62192"/>
        <dbReference type="EC" id="1.10.3.9"/>
    </reaction>
</comment>
<comment type="cofactor">
    <text evidence="2">The D1/D2 heterodimer binds P680, chlorophylls that are the primary electron donor of PSII, and subsequent electron acceptors. It shares a non-heme iron and each subunit binds pheophytin, quinone, additional chlorophylls, carotenoids and lipids. D1 provides most of the ligands for the Mn4-Ca-O5 cluster of the oxygen-evolving complex (OEC). There is also a Cl(-1) ion associated with D1 and D2, which is required for oxygen evolution. The PSII complex binds additional chlorophylls, carotenoids and specific lipids.</text>
</comment>
<comment type="subunit">
    <text evidence="2">PSII is composed of 1 copy each of membrane proteins PsbA, PsbB, PsbC, PsbD, PsbE, PsbF, PsbH, PsbI, PsbJ, PsbK, PsbL, PsbM, PsbT, PsbX, PsbY, PsbZ, Psb30/Ycf12, at least 3 peripheral proteins of the oxygen-evolving complex and a large number of cofactors. It forms dimeric complexes.</text>
</comment>
<comment type="subcellular location">
    <subcellularLocation>
        <location evidence="2">Plastid</location>
        <location evidence="2">Chloroplast thylakoid membrane</location>
        <topology evidence="2">Multi-pass membrane protein</topology>
    </subcellularLocation>
</comment>
<comment type="PTM">
    <text evidence="2">Tyr-161 forms a radical intermediate that is referred to as redox-active TyrZ, YZ or Y-Z.</text>
</comment>
<comment type="PTM">
    <text evidence="2">C-terminally processed by CTPA; processing is essential to allow assembly of the oxygen-evolving complex and thus photosynthetic growth.</text>
</comment>
<comment type="miscellaneous">
    <text evidence="2">2 of the reaction center chlorophylls (ChlD1 and ChlD2) are entirely coordinated by water.</text>
</comment>
<comment type="miscellaneous">
    <text evidence="2">Herbicides such as atrazine, BNT, diuron or ioxynil bind in the Q(B) binding site and block subsequent electron transfer.</text>
</comment>
<comment type="similarity">
    <text evidence="2">Belongs to the reaction center PufL/M/PsbA/D family.</text>
</comment>
<geneLocation type="chloroplast"/>
<sequence length="353" mass="38965">MTAILERRESESLWGRFCNWITSTENRLYIGWFGVLMIPTLLTATSVFIIAFIAAPPVDIDGIREPVSGSLLYGNNIISGAIIPTSAAIGLHFYPIWEAASVDEWLYNGGPYELIVLHFLLGVACYMGREWELSFRLGMRPWIAVAYSAPVAAATAVFLIYPIGQGSFSDGMPLGISGTFNFMIVFQAEHNILMHPFHMLGVAGVFGGSLFSAMHGSLVTSSLIRETTENESANEGYRFGQEEETYNIVAAHGYFGRLIFQYASFNNSRSLHFFLAAWPVVGIWFTALGISTMAFNLNGFNFNQSVVDSQGRVINTWADIINRANLGMEVMHERNAHNFPLDLAAVESPSING</sequence>
<feature type="initiator methionine" description="Removed" evidence="1">
    <location>
        <position position="1"/>
    </location>
</feature>
<feature type="chain" id="PRO_0000090469" description="Photosystem II protein D1" evidence="2">
    <location>
        <begin position="2"/>
        <end position="344"/>
    </location>
</feature>
<feature type="propeptide" id="PRO_0000316482" evidence="2">
    <location>
        <begin position="345"/>
        <end position="353"/>
    </location>
</feature>
<feature type="transmembrane region" description="Helical" evidence="2">
    <location>
        <begin position="29"/>
        <end position="46"/>
    </location>
</feature>
<feature type="transmembrane region" description="Helical" evidence="2">
    <location>
        <begin position="118"/>
        <end position="133"/>
    </location>
</feature>
<feature type="transmembrane region" description="Helical" evidence="2">
    <location>
        <begin position="142"/>
        <end position="156"/>
    </location>
</feature>
<feature type="transmembrane region" description="Helical" evidence="2">
    <location>
        <begin position="197"/>
        <end position="218"/>
    </location>
</feature>
<feature type="transmembrane region" description="Helical" evidence="2">
    <location>
        <begin position="274"/>
        <end position="288"/>
    </location>
</feature>
<feature type="binding site" description="axial binding residue" evidence="2">
    <location>
        <position position="118"/>
    </location>
    <ligand>
        <name>chlorophyll a</name>
        <dbReference type="ChEBI" id="CHEBI:58416"/>
        <label>ChlzD1</label>
    </ligand>
    <ligandPart>
        <name>Mg</name>
        <dbReference type="ChEBI" id="CHEBI:25107"/>
    </ligandPart>
</feature>
<feature type="binding site" evidence="2">
    <location>
        <position position="126"/>
    </location>
    <ligand>
        <name>pheophytin a</name>
        <dbReference type="ChEBI" id="CHEBI:136840"/>
        <label>D1</label>
    </ligand>
</feature>
<feature type="binding site" evidence="2">
    <location>
        <position position="170"/>
    </location>
    <ligand>
        <name>[CaMn4O5] cluster</name>
        <dbReference type="ChEBI" id="CHEBI:189552"/>
    </ligand>
</feature>
<feature type="binding site" evidence="2">
    <location>
        <position position="189"/>
    </location>
    <ligand>
        <name>[CaMn4O5] cluster</name>
        <dbReference type="ChEBI" id="CHEBI:189552"/>
    </ligand>
</feature>
<feature type="binding site" description="axial binding residue" evidence="2">
    <location>
        <position position="198"/>
    </location>
    <ligand>
        <name>chlorophyll a</name>
        <dbReference type="ChEBI" id="CHEBI:58416"/>
        <label>PD1</label>
    </ligand>
    <ligandPart>
        <name>Mg</name>
        <dbReference type="ChEBI" id="CHEBI:25107"/>
    </ligandPart>
</feature>
<feature type="binding site" evidence="2">
    <location>
        <position position="215"/>
    </location>
    <ligand>
        <name>a quinone</name>
        <dbReference type="ChEBI" id="CHEBI:132124"/>
        <label>B</label>
    </ligand>
</feature>
<feature type="binding site" evidence="2">
    <location>
        <position position="215"/>
    </location>
    <ligand>
        <name>Fe cation</name>
        <dbReference type="ChEBI" id="CHEBI:24875"/>
        <note>ligand shared with heterodimeric partner</note>
    </ligand>
</feature>
<feature type="binding site" evidence="2">
    <location>
        <begin position="264"/>
        <end position="265"/>
    </location>
    <ligand>
        <name>a quinone</name>
        <dbReference type="ChEBI" id="CHEBI:132124"/>
        <label>B</label>
    </ligand>
</feature>
<feature type="binding site" evidence="2">
    <location>
        <position position="272"/>
    </location>
    <ligand>
        <name>Fe cation</name>
        <dbReference type="ChEBI" id="CHEBI:24875"/>
        <note>ligand shared with heterodimeric partner</note>
    </ligand>
</feature>
<feature type="binding site" evidence="2">
    <location>
        <position position="332"/>
    </location>
    <ligand>
        <name>[CaMn4O5] cluster</name>
        <dbReference type="ChEBI" id="CHEBI:189552"/>
    </ligand>
</feature>
<feature type="binding site" evidence="2">
    <location>
        <position position="333"/>
    </location>
    <ligand>
        <name>[CaMn4O5] cluster</name>
        <dbReference type="ChEBI" id="CHEBI:189552"/>
    </ligand>
</feature>
<feature type="binding site" evidence="2">
    <location>
        <position position="342"/>
    </location>
    <ligand>
        <name>[CaMn4O5] cluster</name>
        <dbReference type="ChEBI" id="CHEBI:189552"/>
    </ligand>
</feature>
<feature type="binding site" evidence="2">
    <location>
        <position position="344"/>
    </location>
    <ligand>
        <name>[CaMn4O5] cluster</name>
        <dbReference type="ChEBI" id="CHEBI:189552"/>
    </ligand>
</feature>
<feature type="site" description="Tyrosine radical intermediate" evidence="2">
    <location>
        <position position="161"/>
    </location>
</feature>
<feature type="site" description="Stabilizes free radical intermediate" evidence="2">
    <location>
        <position position="190"/>
    </location>
</feature>
<feature type="site" description="Cleavage; by CTPA" evidence="2">
    <location>
        <begin position="344"/>
        <end position="345"/>
    </location>
</feature>
<feature type="modified residue" description="N-acetylthreonine" evidence="1 2">
    <location>
        <position position="2"/>
    </location>
</feature>
<feature type="modified residue" description="Phosphothreonine" evidence="1 2">
    <location>
        <position position="2"/>
    </location>
</feature>
<keyword id="KW-0007">Acetylation</keyword>
<keyword id="KW-0106">Calcium</keyword>
<keyword id="KW-0148">Chlorophyll</keyword>
<keyword id="KW-0150">Chloroplast</keyword>
<keyword id="KW-0157">Chromophore</keyword>
<keyword id="KW-0249">Electron transport</keyword>
<keyword id="KW-0359">Herbicide resistance</keyword>
<keyword id="KW-0408">Iron</keyword>
<keyword id="KW-0460">Magnesium</keyword>
<keyword id="KW-0464">Manganese</keyword>
<keyword id="KW-0472">Membrane</keyword>
<keyword id="KW-0479">Metal-binding</keyword>
<keyword id="KW-0560">Oxidoreductase</keyword>
<keyword id="KW-0597">Phosphoprotein</keyword>
<keyword id="KW-0602">Photosynthesis</keyword>
<keyword id="KW-0604">Photosystem II</keyword>
<keyword id="KW-0934">Plastid</keyword>
<keyword id="KW-0793">Thylakoid</keyword>
<keyword id="KW-0812">Transmembrane</keyword>
<keyword id="KW-1133">Transmembrane helix</keyword>
<keyword id="KW-0813">Transport</keyword>
<name>PSBA_SINAL</name>
<gene>
    <name evidence="2" type="primary">psbA</name>
</gene>
<evidence type="ECO:0000250" key="1">
    <source>
        <dbReference type="UniProtKB" id="P83755"/>
    </source>
</evidence>
<evidence type="ECO:0000255" key="2">
    <source>
        <dbReference type="HAMAP-Rule" id="MF_01379"/>
    </source>
</evidence>
<evidence type="ECO:0000303" key="3">
    <source>
    </source>
</evidence>
<dbReference type="EC" id="1.10.3.9" evidence="2"/>
<dbReference type="EMBL" id="X00340">
    <property type="protein sequence ID" value="CAA25093.1"/>
    <property type="molecule type" value="Genomic_DNA"/>
</dbReference>
<dbReference type="PIR" id="A21730">
    <property type="entry name" value="A21730"/>
</dbReference>
<dbReference type="RefSeq" id="YP_009730647.1">
    <property type="nucleotide sequence ID" value="NC_045948.1"/>
</dbReference>
<dbReference type="SMR" id="P11848"/>
<dbReference type="GeneID" id="43960574"/>
<dbReference type="GO" id="GO:0009535">
    <property type="term" value="C:chloroplast thylakoid membrane"/>
    <property type="evidence" value="ECO:0007669"/>
    <property type="project" value="UniProtKB-SubCell"/>
</dbReference>
<dbReference type="GO" id="GO:0009523">
    <property type="term" value="C:photosystem II"/>
    <property type="evidence" value="ECO:0007669"/>
    <property type="project" value="UniProtKB-KW"/>
</dbReference>
<dbReference type="GO" id="GO:0016168">
    <property type="term" value="F:chlorophyll binding"/>
    <property type="evidence" value="ECO:0007669"/>
    <property type="project" value="UniProtKB-UniRule"/>
</dbReference>
<dbReference type="GO" id="GO:0045156">
    <property type="term" value="F:electron transporter, transferring electrons within the cyclic electron transport pathway of photosynthesis activity"/>
    <property type="evidence" value="ECO:0007669"/>
    <property type="project" value="InterPro"/>
</dbReference>
<dbReference type="GO" id="GO:0005506">
    <property type="term" value="F:iron ion binding"/>
    <property type="evidence" value="ECO:0007669"/>
    <property type="project" value="UniProtKB-UniRule"/>
</dbReference>
<dbReference type="GO" id="GO:0016682">
    <property type="term" value="F:oxidoreductase activity, acting on diphenols and related substances as donors, oxygen as acceptor"/>
    <property type="evidence" value="ECO:0007669"/>
    <property type="project" value="UniProtKB-UniRule"/>
</dbReference>
<dbReference type="GO" id="GO:0010242">
    <property type="term" value="F:oxygen evolving activity"/>
    <property type="evidence" value="ECO:0007669"/>
    <property type="project" value="UniProtKB-EC"/>
</dbReference>
<dbReference type="GO" id="GO:0009772">
    <property type="term" value="P:photosynthetic electron transport in photosystem II"/>
    <property type="evidence" value="ECO:0007669"/>
    <property type="project" value="InterPro"/>
</dbReference>
<dbReference type="GO" id="GO:0009635">
    <property type="term" value="P:response to herbicide"/>
    <property type="evidence" value="ECO:0007669"/>
    <property type="project" value="UniProtKB-KW"/>
</dbReference>
<dbReference type="CDD" id="cd09289">
    <property type="entry name" value="Photosystem-II_D1"/>
    <property type="match status" value="1"/>
</dbReference>
<dbReference type="FunFam" id="1.20.85.10:FF:000002">
    <property type="entry name" value="Photosystem II protein D1"/>
    <property type="match status" value="1"/>
</dbReference>
<dbReference type="Gene3D" id="1.20.85.10">
    <property type="entry name" value="Photosystem II protein D1-like"/>
    <property type="match status" value="1"/>
</dbReference>
<dbReference type="HAMAP" id="MF_01379">
    <property type="entry name" value="PSII_PsbA_D1"/>
    <property type="match status" value="1"/>
</dbReference>
<dbReference type="InterPro" id="IPR055266">
    <property type="entry name" value="D1/D2"/>
</dbReference>
<dbReference type="InterPro" id="IPR036854">
    <property type="entry name" value="Photo_II_D1/D2_sf"/>
</dbReference>
<dbReference type="InterPro" id="IPR000484">
    <property type="entry name" value="Photo_RC_L/M"/>
</dbReference>
<dbReference type="InterPro" id="IPR055265">
    <property type="entry name" value="Photo_RC_L/M_CS"/>
</dbReference>
<dbReference type="InterPro" id="IPR005867">
    <property type="entry name" value="PSII_D1"/>
</dbReference>
<dbReference type="NCBIfam" id="TIGR01151">
    <property type="entry name" value="psbA"/>
    <property type="match status" value="1"/>
</dbReference>
<dbReference type="PANTHER" id="PTHR33149:SF12">
    <property type="entry name" value="PHOTOSYSTEM II D2 PROTEIN"/>
    <property type="match status" value="1"/>
</dbReference>
<dbReference type="PANTHER" id="PTHR33149">
    <property type="entry name" value="PHOTOSYSTEM II PROTEIN D1"/>
    <property type="match status" value="1"/>
</dbReference>
<dbReference type="Pfam" id="PF00124">
    <property type="entry name" value="Photo_RC"/>
    <property type="match status" value="1"/>
</dbReference>
<dbReference type="PRINTS" id="PR00256">
    <property type="entry name" value="REACTNCENTRE"/>
</dbReference>
<dbReference type="SUPFAM" id="SSF81483">
    <property type="entry name" value="Bacterial photosystem II reaction centre, L and M subunits"/>
    <property type="match status" value="1"/>
</dbReference>
<dbReference type="PROSITE" id="PS00244">
    <property type="entry name" value="REACTION_CENTER"/>
    <property type="match status" value="1"/>
</dbReference>
<organism>
    <name type="scientific">Sinapis alba</name>
    <name type="common">White mustard</name>
    <name type="synonym">Brassica hirta</name>
    <dbReference type="NCBI Taxonomy" id="3728"/>
    <lineage>
        <taxon>Eukaryota</taxon>
        <taxon>Viridiplantae</taxon>
        <taxon>Streptophyta</taxon>
        <taxon>Embryophyta</taxon>
        <taxon>Tracheophyta</taxon>
        <taxon>Spermatophyta</taxon>
        <taxon>Magnoliopsida</taxon>
        <taxon>eudicotyledons</taxon>
        <taxon>Gunneridae</taxon>
        <taxon>Pentapetalae</taxon>
        <taxon>rosids</taxon>
        <taxon>malvids</taxon>
        <taxon>Brassicales</taxon>
        <taxon>Brassicaceae</taxon>
        <taxon>Brassiceae</taxon>
        <taxon>Sinapis</taxon>
    </lineage>
</organism>
<accession>P11848</accession>
<proteinExistence type="inferred from homology"/>
<reference key="1">
    <citation type="journal article" date="1984" name="Nucleic Acids Res.">
        <title>Structure of the chloroplast gene for the precursor of the Mr 32,000 photosystem II protein from mustard (Sinapis alba L.).</title>
        <authorList>
            <person name="Link G."/>
            <person name="Langridge U."/>
        </authorList>
    </citation>
    <scope>NUCLEOTIDE SEQUENCE [GENOMIC DNA]</scope>
</reference>